<reference key="1">
    <citation type="journal article" date="2009" name="Appl. Environ. Microbiol.">
        <title>Complete genome sequence of the chemolithoautotrophic marine magnetotactic coccus strain MC-1.</title>
        <authorList>
            <person name="Schubbe S."/>
            <person name="Williams T.J."/>
            <person name="Xie G."/>
            <person name="Kiss H.E."/>
            <person name="Brettin T.S."/>
            <person name="Martinez D."/>
            <person name="Ross C.A."/>
            <person name="Schuler D."/>
            <person name="Cox B.L."/>
            <person name="Nealson K.H."/>
            <person name="Bazylinski D.A."/>
        </authorList>
    </citation>
    <scope>NUCLEOTIDE SEQUENCE [LARGE SCALE GENOMIC DNA]</scope>
    <source>
        <strain>ATCC BAA-1437 / JCM 17883 / MC-1</strain>
    </source>
</reference>
<keyword id="KW-0997">Cell inner membrane</keyword>
<keyword id="KW-1003">Cell membrane</keyword>
<keyword id="KW-0472">Membrane</keyword>
<keyword id="KW-1185">Reference proteome</keyword>
<feature type="chain" id="PRO_1000060726" description="Putative membrane protein insertion efficiency factor">
    <location>
        <begin position="1"/>
        <end position="69"/>
    </location>
</feature>
<dbReference type="EMBL" id="CP000471">
    <property type="protein sequence ID" value="ABK46243.1"/>
    <property type="molecule type" value="Genomic_DNA"/>
</dbReference>
<dbReference type="RefSeq" id="WP_011715295.1">
    <property type="nucleotide sequence ID" value="NC_008576.1"/>
</dbReference>
<dbReference type="STRING" id="156889.Mmc1_3758"/>
<dbReference type="KEGG" id="mgm:Mmc1_3758"/>
<dbReference type="eggNOG" id="COG0759">
    <property type="taxonomic scope" value="Bacteria"/>
</dbReference>
<dbReference type="HOGENOM" id="CLU_144811_6_1_5"/>
<dbReference type="OrthoDB" id="9801753at2"/>
<dbReference type="Proteomes" id="UP000002586">
    <property type="component" value="Chromosome"/>
</dbReference>
<dbReference type="GO" id="GO:0005886">
    <property type="term" value="C:plasma membrane"/>
    <property type="evidence" value="ECO:0007669"/>
    <property type="project" value="UniProtKB-SubCell"/>
</dbReference>
<dbReference type="HAMAP" id="MF_00386">
    <property type="entry name" value="UPF0161_YidD"/>
    <property type="match status" value="1"/>
</dbReference>
<dbReference type="InterPro" id="IPR002696">
    <property type="entry name" value="Membr_insert_effic_factor_YidD"/>
</dbReference>
<dbReference type="NCBIfam" id="TIGR00278">
    <property type="entry name" value="membrane protein insertion efficiency factor YidD"/>
    <property type="match status" value="1"/>
</dbReference>
<dbReference type="PANTHER" id="PTHR33383">
    <property type="entry name" value="MEMBRANE PROTEIN INSERTION EFFICIENCY FACTOR-RELATED"/>
    <property type="match status" value="1"/>
</dbReference>
<dbReference type="PANTHER" id="PTHR33383:SF1">
    <property type="entry name" value="MEMBRANE PROTEIN INSERTION EFFICIENCY FACTOR-RELATED"/>
    <property type="match status" value="1"/>
</dbReference>
<dbReference type="Pfam" id="PF01809">
    <property type="entry name" value="YidD"/>
    <property type="match status" value="1"/>
</dbReference>
<dbReference type="SMART" id="SM01234">
    <property type="entry name" value="Haemolytic"/>
    <property type="match status" value="1"/>
</dbReference>
<gene>
    <name type="ordered locus">Mmc1_3758</name>
</gene>
<protein>
    <recommendedName>
        <fullName evidence="1">Putative membrane protein insertion efficiency factor</fullName>
    </recommendedName>
</protein>
<sequence>MGRLLVLLVRFYQLFISPVLPPSCRHSPTCSQYAIEALQKHGAIKGSWLAFRRVLRCNPWHPGGYDPVP</sequence>
<name>YIDD_MAGMM</name>
<evidence type="ECO:0000255" key="1">
    <source>
        <dbReference type="HAMAP-Rule" id="MF_00386"/>
    </source>
</evidence>
<comment type="function">
    <text evidence="1">Could be involved in insertion of integral membrane proteins into the membrane.</text>
</comment>
<comment type="subcellular location">
    <subcellularLocation>
        <location evidence="1">Cell inner membrane</location>
        <topology evidence="1">Peripheral membrane protein</topology>
        <orientation evidence="1">Cytoplasmic side</orientation>
    </subcellularLocation>
</comment>
<comment type="similarity">
    <text evidence="1">Belongs to the UPF0161 family.</text>
</comment>
<accession>A0LE50</accession>
<organism>
    <name type="scientific">Magnetococcus marinus (strain ATCC BAA-1437 / JCM 17883 / MC-1)</name>
    <dbReference type="NCBI Taxonomy" id="156889"/>
    <lineage>
        <taxon>Bacteria</taxon>
        <taxon>Pseudomonadati</taxon>
        <taxon>Pseudomonadota</taxon>
        <taxon>Alphaproteobacteria</taxon>
        <taxon>Magnetococcales</taxon>
        <taxon>Magnetococcaceae</taxon>
        <taxon>Magnetococcus</taxon>
    </lineage>
</organism>
<proteinExistence type="inferred from homology"/>